<protein>
    <recommendedName>
        <fullName>Uncharacterized protein R02378</fullName>
    </recommendedName>
</protein>
<gene>
    <name type="ordered locus">R02378</name>
    <name type="ORF">SMc02716</name>
</gene>
<sequence length="83" mass="9676">MALYIKDPTVDRMAEKLQERLGVRTKTDAVRIALQHELDRVEDEIPLREKLAALRQQARDRLGPPVHGIDMKKLMDELWEEGE</sequence>
<organism>
    <name type="scientific">Rhizobium meliloti (strain 1021)</name>
    <name type="common">Ensifer meliloti</name>
    <name type="synonym">Sinorhizobium meliloti</name>
    <dbReference type="NCBI Taxonomy" id="266834"/>
    <lineage>
        <taxon>Bacteria</taxon>
        <taxon>Pseudomonadati</taxon>
        <taxon>Pseudomonadota</taxon>
        <taxon>Alphaproteobacteria</taxon>
        <taxon>Hyphomicrobiales</taxon>
        <taxon>Rhizobiaceae</taxon>
        <taxon>Sinorhizobium/Ensifer group</taxon>
        <taxon>Sinorhizobium</taxon>
    </lineage>
</organism>
<name>Y2378_RHIME</name>
<keyword id="KW-1185">Reference proteome</keyword>
<feature type="chain" id="PRO_0000160642" description="Uncharacterized protein R02378">
    <location>
        <begin position="1"/>
        <end position="83"/>
    </location>
</feature>
<proteinExistence type="predicted"/>
<accession>Q9X7L3</accession>
<reference key="1">
    <citation type="submission" date="1999-02" db="EMBL/GenBank/DDBJ databases">
        <title>The Rhizobium meliloti leuA gene is essential for symbiosis.</title>
        <authorList>
            <person name="Sanjuan-Pinilla J.M."/>
            <person name="Olivares J."/>
            <person name="Sanjuan J."/>
        </authorList>
    </citation>
    <scope>NUCLEOTIDE SEQUENCE [GENOMIC DNA]</scope>
    <source>
        <strain>GR4</strain>
    </source>
</reference>
<reference key="2">
    <citation type="journal article" date="2001" name="Proc. Natl. Acad. Sci. U.S.A.">
        <title>Analysis of the chromosome sequence of the legume symbiont Sinorhizobium meliloti strain 1021.</title>
        <authorList>
            <person name="Capela D."/>
            <person name="Barloy-Hubler F."/>
            <person name="Gouzy J."/>
            <person name="Bothe G."/>
            <person name="Ampe F."/>
            <person name="Batut J."/>
            <person name="Boistard P."/>
            <person name="Becker A."/>
            <person name="Boutry M."/>
            <person name="Cadieu E."/>
            <person name="Dreano S."/>
            <person name="Gloux S."/>
            <person name="Godrie T."/>
            <person name="Goffeau A."/>
            <person name="Kahn D."/>
            <person name="Kiss E."/>
            <person name="Lelaure V."/>
            <person name="Masuy D."/>
            <person name="Pohl T."/>
            <person name="Portetelle D."/>
            <person name="Puehler A."/>
            <person name="Purnelle B."/>
            <person name="Ramsperger U."/>
            <person name="Renard C."/>
            <person name="Thebault P."/>
            <person name="Vandenbol M."/>
            <person name="Weidner S."/>
            <person name="Galibert F."/>
        </authorList>
    </citation>
    <scope>NUCLEOTIDE SEQUENCE [LARGE SCALE GENOMIC DNA]</scope>
    <source>
        <strain>1021</strain>
    </source>
</reference>
<reference key="3">
    <citation type="journal article" date="2001" name="Science">
        <title>The composite genome of the legume symbiont Sinorhizobium meliloti.</title>
        <authorList>
            <person name="Galibert F."/>
            <person name="Finan T.M."/>
            <person name="Long S.R."/>
            <person name="Puehler A."/>
            <person name="Abola P."/>
            <person name="Ampe F."/>
            <person name="Barloy-Hubler F."/>
            <person name="Barnett M.J."/>
            <person name="Becker A."/>
            <person name="Boistard P."/>
            <person name="Bothe G."/>
            <person name="Boutry M."/>
            <person name="Bowser L."/>
            <person name="Buhrmester J."/>
            <person name="Cadieu E."/>
            <person name="Capela D."/>
            <person name="Chain P."/>
            <person name="Cowie A."/>
            <person name="Davis R.W."/>
            <person name="Dreano S."/>
            <person name="Federspiel N.A."/>
            <person name="Fisher R.F."/>
            <person name="Gloux S."/>
            <person name="Godrie T."/>
            <person name="Goffeau A."/>
            <person name="Golding B."/>
            <person name="Gouzy J."/>
            <person name="Gurjal M."/>
            <person name="Hernandez-Lucas I."/>
            <person name="Hong A."/>
            <person name="Huizar L."/>
            <person name="Hyman R.W."/>
            <person name="Jones T."/>
            <person name="Kahn D."/>
            <person name="Kahn M.L."/>
            <person name="Kalman S."/>
            <person name="Keating D.H."/>
            <person name="Kiss E."/>
            <person name="Komp C."/>
            <person name="Lelaure V."/>
            <person name="Masuy D."/>
            <person name="Palm C."/>
            <person name="Peck M.C."/>
            <person name="Pohl T.M."/>
            <person name="Portetelle D."/>
            <person name="Purnelle B."/>
            <person name="Ramsperger U."/>
            <person name="Surzycki R."/>
            <person name="Thebault P."/>
            <person name="Vandenbol M."/>
            <person name="Vorhoelter F.J."/>
            <person name="Weidner S."/>
            <person name="Wells D.H."/>
            <person name="Wong K."/>
            <person name="Yeh K.-C."/>
            <person name="Batut J."/>
        </authorList>
    </citation>
    <scope>NUCLEOTIDE SEQUENCE [LARGE SCALE GENOMIC DNA]</scope>
    <source>
        <strain>1021</strain>
    </source>
</reference>
<dbReference type="EMBL" id="AJ132004">
    <property type="protein sequence ID" value="CAB39978.1"/>
    <property type="molecule type" value="Genomic_DNA"/>
</dbReference>
<dbReference type="EMBL" id="AL591688">
    <property type="protein sequence ID" value="CAC46957.1"/>
    <property type="molecule type" value="Genomic_DNA"/>
</dbReference>
<dbReference type="RefSeq" id="NP_386484.1">
    <property type="nucleotide sequence ID" value="NC_003047.1"/>
</dbReference>
<dbReference type="RefSeq" id="WP_010969893.1">
    <property type="nucleotide sequence ID" value="NC_003047.1"/>
</dbReference>
<dbReference type="EnsemblBacteria" id="CAC46957">
    <property type="protein sequence ID" value="CAC46957"/>
    <property type="gene ID" value="SMc02716"/>
</dbReference>
<dbReference type="KEGG" id="sme:SMc02716"/>
<dbReference type="PATRIC" id="fig|266834.11.peg.3861"/>
<dbReference type="eggNOG" id="COG4423">
    <property type="taxonomic scope" value="Bacteria"/>
</dbReference>
<dbReference type="HOGENOM" id="CLU_176020_1_0_5"/>
<dbReference type="OrthoDB" id="8301496at2"/>
<dbReference type="Proteomes" id="UP000001976">
    <property type="component" value="Chromosome"/>
</dbReference>
<dbReference type="InterPro" id="IPR011660">
    <property type="entry name" value="VapB-like"/>
</dbReference>
<dbReference type="Pfam" id="PF07704">
    <property type="entry name" value="PSK_trans_fac"/>
    <property type="match status" value="1"/>
</dbReference>